<dbReference type="EC" id="4.2.1.33" evidence="1"/>
<dbReference type="EMBL" id="AM286690">
    <property type="protein sequence ID" value="CAL16918.1"/>
    <property type="status" value="ALT_INIT"/>
    <property type="molecule type" value="Genomic_DNA"/>
</dbReference>
<dbReference type="RefSeq" id="WP_035460343.1">
    <property type="nucleotide sequence ID" value="NC_008260.1"/>
</dbReference>
<dbReference type="SMR" id="Q0VPI0"/>
<dbReference type="STRING" id="393595.ABO_1470"/>
<dbReference type="KEGG" id="abo:ABO_1470"/>
<dbReference type="eggNOG" id="COG0065">
    <property type="taxonomic scope" value="Bacteria"/>
</dbReference>
<dbReference type="HOGENOM" id="CLU_006714_3_4_6"/>
<dbReference type="OrthoDB" id="9802769at2"/>
<dbReference type="UniPathway" id="UPA00048">
    <property type="reaction ID" value="UER00071"/>
</dbReference>
<dbReference type="Proteomes" id="UP000008871">
    <property type="component" value="Chromosome"/>
</dbReference>
<dbReference type="GO" id="GO:0003861">
    <property type="term" value="F:3-isopropylmalate dehydratase activity"/>
    <property type="evidence" value="ECO:0007669"/>
    <property type="project" value="UniProtKB-UniRule"/>
</dbReference>
<dbReference type="GO" id="GO:0051539">
    <property type="term" value="F:4 iron, 4 sulfur cluster binding"/>
    <property type="evidence" value="ECO:0007669"/>
    <property type="project" value="UniProtKB-KW"/>
</dbReference>
<dbReference type="GO" id="GO:0046872">
    <property type="term" value="F:metal ion binding"/>
    <property type="evidence" value="ECO:0007669"/>
    <property type="project" value="UniProtKB-KW"/>
</dbReference>
<dbReference type="GO" id="GO:0009098">
    <property type="term" value="P:L-leucine biosynthetic process"/>
    <property type="evidence" value="ECO:0007669"/>
    <property type="project" value="UniProtKB-UniRule"/>
</dbReference>
<dbReference type="CDD" id="cd01583">
    <property type="entry name" value="IPMI"/>
    <property type="match status" value="1"/>
</dbReference>
<dbReference type="FunFam" id="3.30.499.10:FF:000007">
    <property type="entry name" value="3-isopropylmalate dehydratase large subunit"/>
    <property type="match status" value="1"/>
</dbReference>
<dbReference type="Gene3D" id="3.30.499.10">
    <property type="entry name" value="Aconitase, domain 3"/>
    <property type="match status" value="2"/>
</dbReference>
<dbReference type="HAMAP" id="MF_01026">
    <property type="entry name" value="LeuC_type1"/>
    <property type="match status" value="1"/>
</dbReference>
<dbReference type="InterPro" id="IPR004430">
    <property type="entry name" value="3-IsopropMal_deHydase_lsu"/>
</dbReference>
<dbReference type="InterPro" id="IPR015931">
    <property type="entry name" value="Acnase/IPM_dHydase_lsu_aba_1/3"/>
</dbReference>
<dbReference type="InterPro" id="IPR001030">
    <property type="entry name" value="Acoase/IPM_deHydtase_lsu_aba"/>
</dbReference>
<dbReference type="InterPro" id="IPR018136">
    <property type="entry name" value="Aconitase_4Fe-4S_BS"/>
</dbReference>
<dbReference type="InterPro" id="IPR036008">
    <property type="entry name" value="Aconitase_4Fe-4S_dom"/>
</dbReference>
<dbReference type="InterPro" id="IPR050067">
    <property type="entry name" value="IPM_dehydratase_rel_enz"/>
</dbReference>
<dbReference type="InterPro" id="IPR033941">
    <property type="entry name" value="IPMI_cat"/>
</dbReference>
<dbReference type="NCBIfam" id="TIGR00170">
    <property type="entry name" value="leuC"/>
    <property type="match status" value="1"/>
</dbReference>
<dbReference type="NCBIfam" id="NF004016">
    <property type="entry name" value="PRK05478.1"/>
    <property type="match status" value="1"/>
</dbReference>
<dbReference type="NCBIfam" id="NF009116">
    <property type="entry name" value="PRK12466.1"/>
    <property type="match status" value="1"/>
</dbReference>
<dbReference type="PANTHER" id="PTHR43822:SF9">
    <property type="entry name" value="3-ISOPROPYLMALATE DEHYDRATASE"/>
    <property type="match status" value="1"/>
</dbReference>
<dbReference type="PANTHER" id="PTHR43822">
    <property type="entry name" value="HOMOACONITASE, MITOCHONDRIAL-RELATED"/>
    <property type="match status" value="1"/>
</dbReference>
<dbReference type="Pfam" id="PF00330">
    <property type="entry name" value="Aconitase"/>
    <property type="match status" value="1"/>
</dbReference>
<dbReference type="PRINTS" id="PR00415">
    <property type="entry name" value="ACONITASE"/>
</dbReference>
<dbReference type="SUPFAM" id="SSF53732">
    <property type="entry name" value="Aconitase iron-sulfur domain"/>
    <property type="match status" value="1"/>
</dbReference>
<dbReference type="PROSITE" id="PS00450">
    <property type="entry name" value="ACONITASE_1"/>
    <property type="match status" value="1"/>
</dbReference>
<dbReference type="PROSITE" id="PS01244">
    <property type="entry name" value="ACONITASE_2"/>
    <property type="match status" value="1"/>
</dbReference>
<gene>
    <name evidence="1" type="primary">leuC</name>
    <name type="ordered locus">ABO_1470</name>
</gene>
<sequence length="472" mass="50419">MAGKTLYDKLWDAHLVAEREDGSALIYIDRQIIHEVTSPQAFEGLRLAGRQPWRTSASVATIDHNVPTTPFNSAADITDETSRIQVQTLENNTREFGITEFGIGDVRQGIVHVMAPEQGAVVPGMTVVCGDSHTSTNGALACLAHGIGTSEVEHVLATQTLVAKKMNNMRVSVEGELGPGVTAKDVVLHIIGVIGTAGGTGYALEFAGSAMRSLSMEGRMTVCNMAIEAGARAGMVAVDDVTIDYVKGRPFAPKGADWDKAEAYWRTLVSDADAQFDQQVDIDAADIKPQVSWGTSPEMVVPVDAHLPDPAAETDEVKRSGMTRAYEYMGLTPGMPVTEIKVDRVFIGSCTNSRIEDLRAAAEVAKGRQKAGSVKQVLVVPGSGLVKQQAEKEGLDKIFVEAGFEWREPGCSMCLAMNPDRLEAGEHCASTSNRNFEGRQGNGGRTHLVSPAMAAAAAVAGHFVDIRELDQA</sequence>
<accession>Q0VPI0</accession>
<reference key="1">
    <citation type="journal article" date="2006" name="Nat. Biotechnol.">
        <title>Genome sequence of the ubiquitous hydrocarbon-degrading marine bacterium Alcanivorax borkumensis.</title>
        <authorList>
            <person name="Schneiker S."/>
            <person name="Martins dos Santos V.A.P."/>
            <person name="Bartels D."/>
            <person name="Bekel T."/>
            <person name="Brecht M."/>
            <person name="Buhrmester J."/>
            <person name="Chernikova T.N."/>
            <person name="Denaro R."/>
            <person name="Ferrer M."/>
            <person name="Gertler C."/>
            <person name="Goesmann A."/>
            <person name="Golyshina O.V."/>
            <person name="Kaminski F."/>
            <person name="Khachane A.N."/>
            <person name="Lang S."/>
            <person name="Linke B."/>
            <person name="McHardy A.C."/>
            <person name="Meyer F."/>
            <person name="Nechitaylo T."/>
            <person name="Puehler A."/>
            <person name="Regenhardt D."/>
            <person name="Rupp O."/>
            <person name="Sabirova J.S."/>
            <person name="Selbitschka W."/>
            <person name="Yakimov M.M."/>
            <person name="Timmis K.N."/>
            <person name="Vorhoelter F.-J."/>
            <person name="Weidner S."/>
            <person name="Kaiser O."/>
            <person name="Golyshin P.N."/>
        </authorList>
    </citation>
    <scope>NUCLEOTIDE SEQUENCE [LARGE SCALE GENOMIC DNA]</scope>
    <source>
        <strain>ATCC 700651 / DSM 11573 / NCIMB 13689 / SK2</strain>
    </source>
</reference>
<organism>
    <name type="scientific">Alcanivorax borkumensis (strain ATCC 700651 / DSM 11573 / NCIMB 13689 / SK2)</name>
    <dbReference type="NCBI Taxonomy" id="393595"/>
    <lineage>
        <taxon>Bacteria</taxon>
        <taxon>Pseudomonadati</taxon>
        <taxon>Pseudomonadota</taxon>
        <taxon>Gammaproteobacteria</taxon>
        <taxon>Oceanospirillales</taxon>
        <taxon>Alcanivoracaceae</taxon>
        <taxon>Alcanivorax</taxon>
    </lineage>
</organism>
<keyword id="KW-0004">4Fe-4S</keyword>
<keyword id="KW-0028">Amino-acid biosynthesis</keyword>
<keyword id="KW-0100">Branched-chain amino acid biosynthesis</keyword>
<keyword id="KW-0408">Iron</keyword>
<keyword id="KW-0411">Iron-sulfur</keyword>
<keyword id="KW-0432">Leucine biosynthesis</keyword>
<keyword id="KW-0456">Lyase</keyword>
<keyword id="KW-0479">Metal-binding</keyword>
<keyword id="KW-1185">Reference proteome</keyword>
<evidence type="ECO:0000255" key="1">
    <source>
        <dbReference type="HAMAP-Rule" id="MF_01026"/>
    </source>
</evidence>
<evidence type="ECO:0000305" key="2"/>
<feature type="chain" id="PRO_0000319807" description="3-isopropylmalate dehydratase large subunit">
    <location>
        <begin position="1"/>
        <end position="472"/>
    </location>
</feature>
<feature type="binding site" evidence="1">
    <location>
        <position position="350"/>
    </location>
    <ligand>
        <name>[4Fe-4S] cluster</name>
        <dbReference type="ChEBI" id="CHEBI:49883"/>
    </ligand>
</feature>
<feature type="binding site" evidence="1">
    <location>
        <position position="411"/>
    </location>
    <ligand>
        <name>[4Fe-4S] cluster</name>
        <dbReference type="ChEBI" id="CHEBI:49883"/>
    </ligand>
</feature>
<feature type="binding site" evidence="1">
    <location>
        <position position="414"/>
    </location>
    <ligand>
        <name>[4Fe-4S] cluster</name>
        <dbReference type="ChEBI" id="CHEBI:49883"/>
    </ligand>
</feature>
<proteinExistence type="inferred from homology"/>
<name>LEUC_ALCBS</name>
<protein>
    <recommendedName>
        <fullName evidence="1">3-isopropylmalate dehydratase large subunit</fullName>
        <ecNumber evidence="1">4.2.1.33</ecNumber>
    </recommendedName>
    <alternativeName>
        <fullName evidence="1">Alpha-IPM isomerase</fullName>
        <shortName evidence="1">IPMI</shortName>
    </alternativeName>
    <alternativeName>
        <fullName evidence="1">Isopropylmalate isomerase</fullName>
    </alternativeName>
</protein>
<comment type="function">
    <text evidence="1">Catalyzes the isomerization between 2-isopropylmalate and 3-isopropylmalate, via the formation of 2-isopropylmaleate.</text>
</comment>
<comment type="catalytic activity">
    <reaction evidence="1">
        <text>(2R,3S)-3-isopropylmalate = (2S)-2-isopropylmalate</text>
        <dbReference type="Rhea" id="RHEA:32287"/>
        <dbReference type="ChEBI" id="CHEBI:1178"/>
        <dbReference type="ChEBI" id="CHEBI:35121"/>
        <dbReference type="EC" id="4.2.1.33"/>
    </reaction>
</comment>
<comment type="cofactor">
    <cofactor evidence="1">
        <name>[4Fe-4S] cluster</name>
        <dbReference type="ChEBI" id="CHEBI:49883"/>
    </cofactor>
    <text evidence="1">Binds 1 [4Fe-4S] cluster per subunit.</text>
</comment>
<comment type="pathway">
    <text evidence="1">Amino-acid biosynthesis; L-leucine biosynthesis; L-leucine from 3-methyl-2-oxobutanoate: step 2/4.</text>
</comment>
<comment type="subunit">
    <text evidence="1">Heterodimer of LeuC and LeuD.</text>
</comment>
<comment type="similarity">
    <text evidence="1">Belongs to the aconitase/IPM isomerase family. LeuC type 1 subfamily.</text>
</comment>
<comment type="sequence caution" evidence="2">
    <conflict type="erroneous initiation">
        <sequence resource="EMBL-CDS" id="CAL16918"/>
    </conflict>
</comment>